<reference key="1">
    <citation type="journal article" date="2002" name="Nature">
        <title>The genome sequence of Schizosaccharomyces pombe.</title>
        <authorList>
            <person name="Wood V."/>
            <person name="Gwilliam R."/>
            <person name="Rajandream M.A."/>
            <person name="Lyne M.H."/>
            <person name="Lyne R."/>
            <person name="Stewart A."/>
            <person name="Sgouros J.G."/>
            <person name="Peat N."/>
            <person name="Hayles J."/>
            <person name="Baker S.G."/>
            <person name="Basham D."/>
            <person name="Bowman S."/>
            <person name="Brooks K."/>
            <person name="Brown D."/>
            <person name="Brown S."/>
            <person name="Chillingworth T."/>
            <person name="Churcher C.M."/>
            <person name="Collins M."/>
            <person name="Connor R."/>
            <person name="Cronin A."/>
            <person name="Davis P."/>
            <person name="Feltwell T."/>
            <person name="Fraser A."/>
            <person name="Gentles S."/>
            <person name="Goble A."/>
            <person name="Hamlin N."/>
            <person name="Harris D.E."/>
            <person name="Hidalgo J."/>
            <person name="Hodgson G."/>
            <person name="Holroyd S."/>
            <person name="Hornsby T."/>
            <person name="Howarth S."/>
            <person name="Huckle E.J."/>
            <person name="Hunt S."/>
            <person name="Jagels K."/>
            <person name="James K.D."/>
            <person name="Jones L."/>
            <person name="Jones M."/>
            <person name="Leather S."/>
            <person name="McDonald S."/>
            <person name="McLean J."/>
            <person name="Mooney P."/>
            <person name="Moule S."/>
            <person name="Mungall K.L."/>
            <person name="Murphy L.D."/>
            <person name="Niblett D."/>
            <person name="Odell C."/>
            <person name="Oliver K."/>
            <person name="O'Neil S."/>
            <person name="Pearson D."/>
            <person name="Quail M.A."/>
            <person name="Rabbinowitsch E."/>
            <person name="Rutherford K.M."/>
            <person name="Rutter S."/>
            <person name="Saunders D."/>
            <person name="Seeger K."/>
            <person name="Sharp S."/>
            <person name="Skelton J."/>
            <person name="Simmonds M.N."/>
            <person name="Squares R."/>
            <person name="Squares S."/>
            <person name="Stevens K."/>
            <person name="Taylor K."/>
            <person name="Taylor R.G."/>
            <person name="Tivey A."/>
            <person name="Walsh S.V."/>
            <person name="Warren T."/>
            <person name="Whitehead S."/>
            <person name="Woodward J.R."/>
            <person name="Volckaert G."/>
            <person name="Aert R."/>
            <person name="Robben J."/>
            <person name="Grymonprez B."/>
            <person name="Weltjens I."/>
            <person name="Vanstreels E."/>
            <person name="Rieger M."/>
            <person name="Schaefer M."/>
            <person name="Mueller-Auer S."/>
            <person name="Gabel C."/>
            <person name="Fuchs M."/>
            <person name="Duesterhoeft A."/>
            <person name="Fritzc C."/>
            <person name="Holzer E."/>
            <person name="Moestl D."/>
            <person name="Hilbert H."/>
            <person name="Borzym K."/>
            <person name="Langer I."/>
            <person name="Beck A."/>
            <person name="Lehrach H."/>
            <person name="Reinhardt R."/>
            <person name="Pohl T.M."/>
            <person name="Eger P."/>
            <person name="Zimmermann W."/>
            <person name="Wedler H."/>
            <person name="Wambutt R."/>
            <person name="Purnelle B."/>
            <person name="Goffeau A."/>
            <person name="Cadieu E."/>
            <person name="Dreano S."/>
            <person name="Gloux S."/>
            <person name="Lelaure V."/>
            <person name="Mottier S."/>
            <person name="Galibert F."/>
            <person name="Aves S.J."/>
            <person name="Xiang Z."/>
            <person name="Hunt C."/>
            <person name="Moore K."/>
            <person name="Hurst S.M."/>
            <person name="Lucas M."/>
            <person name="Rochet M."/>
            <person name="Gaillardin C."/>
            <person name="Tallada V.A."/>
            <person name="Garzon A."/>
            <person name="Thode G."/>
            <person name="Daga R.R."/>
            <person name="Cruzado L."/>
            <person name="Jimenez J."/>
            <person name="Sanchez M."/>
            <person name="del Rey F."/>
            <person name="Benito J."/>
            <person name="Dominguez A."/>
            <person name="Revuelta J.L."/>
            <person name="Moreno S."/>
            <person name="Armstrong J."/>
            <person name="Forsburg S.L."/>
            <person name="Cerutti L."/>
            <person name="Lowe T."/>
            <person name="McCombie W.R."/>
            <person name="Paulsen I."/>
            <person name="Potashkin J."/>
            <person name="Shpakovski G.V."/>
            <person name="Ussery D."/>
            <person name="Barrell B.G."/>
            <person name="Nurse P."/>
        </authorList>
    </citation>
    <scope>NUCLEOTIDE SEQUENCE [LARGE SCALE GENOMIC DNA]</scope>
    <source>
        <strain>972 / ATCC 24843</strain>
    </source>
</reference>
<reference key="2">
    <citation type="journal article" date="2006" name="Nat. Biotechnol.">
        <title>ORFeome cloning and global analysis of protein localization in the fission yeast Schizosaccharomyces pombe.</title>
        <authorList>
            <person name="Matsuyama A."/>
            <person name="Arai R."/>
            <person name="Yashiroda Y."/>
            <person name="Shirai A."/>
            <person name="Kamata A."/>
            <person name="Sekido S."/>
            <person name="Kobayashi Y."/>
            <person name="Hashimoto A."/>
            <person name="Hamamoto M."/>
            <person name="Hiraoka Y."/>
            <person name="Horinouchi S."/>
            <person name="Yoshida M."/>
        </authorList>
    </citation>
    <scope>SUBCELLULAR LOCATION [LARGE SCALE ANALYSIS]</scope>
</reference>
<keyword id="KW-0963">Cytoplasm</keyword>
<keyword id="KW-0378">Hydrolase</keyword>
<keyword id="KW-0539">Nucleus</keyword>
<keyword id="KW-1185">Reference proteome</keyword>
<dbReference type="EC" id="3.1.3.-"/>
<dbReference type="EMBL" id="CU329670">
    <property type="protein sequence ID" value="CAB58725.1"/>
    <property type="molecule type" value="Genomic_DNA"/>
</dbReference>
<dbReference type="PIR" id="T38897">
    <property type="entry name" value="T38897"/>
</dbReference>
<dbReference type="RefSeq" id="NP_593976.1">
    <property type="nucleotide sequence ID" value="NM_001019402.2"/>
</dbReference>
<dbReference type="SMR" id="Q9UT63"/>
<dbReference type="FunCoup" id="Q9UT63">
    <property type="interactions" value="434"/>
</dbReference>
<dbReference type="STRING" id="284812.Q9UT63"/>
<dbReference type="PaxDb" id="4896-SPAC513.02.1"/>
<dbReference type="EnsemblFungi" id="SPAC513.02.1">
    <property type="protein sequence ID" value="SPAC513.02.1:pep"/>
    <property type="gene ID" value="SPAC513.02"/>
</dbReference>
<dbReference type="KEGG" id="spo:2543364"/>
<dbReference type="PomBase" id="SPAC513.02"/>
<dbReference type="VEuPathDB" id="FungiDB:SPAC513.02"/>
<dbReference type="eggNOG" id="KOG4754">
    <property type="taxonomic scope" value="Eukaryota"/>
</dbReference>
<dbReference type="HOGENOM" id="CLU_039184_1_2_1"/>
<dbReference type="InParanoid" id="Q9UT63"/>
<dbReference type="OMA" id="CEDLQHQ"/>
<dbReference type="PhylomeDB" id="Q9UT63"/>
<dbReference type="PRO" id="PR:Q9UT63"/>
<dbReference type="Proteomes" id="UP000002485">
    <property type="component" value="Chromosome I"/>
</dbReference>
<dbReference type="GO" id="GO:0005737">
    <property type="term" value="C:cytoplasm"/>
    <property type="evidence" value="ECO:0000318"/>
    <property type="project" value="GO_Central"/>
</dbReference>
<dbReference type="GO" id="GO:0005829">
    <property type="term" value="C:cytosol"/>
    <property type="evidence" value="ECO:0007005"/>
    <property type="project" value="PomBase"/>
</dbReference>
<dbReference type="GO" id="GO:0005634">
    <property type="term" value="C:nucleus"/>
    <property type="evidence" value="ECO:0007005"/>
    <property type="project" value="PomBase"/>
</dbReference>
<dbReference type="GO" id="GO:0016791">
    <property type="term" value="F:phosphatase activity"/>
    <property type="evidence" value="ECO:0000318"/>
    <property type="project" value="GO_Central"/>
</dbReference>
<dbReference type="CDD" id="cd07067">
    <property type="entry name" value="HP_PGM_like"/>
    <property type="match status" value="1"/>
</dbReference>
<dbReference type="FunFam" id="3.40.50.1240:FF:000117">
    <property type="entry name" value="Probable phosphatase SPAC5H10.03"/>
    <property type="match status" value="1"/>
</dbReference>
<dbReference type="Gene3D" id="3.40.50.1240">
    <property type="entry name" value="Phosphoglycerate mutase-like"/>
    <property type="match status" value="1"/>
</dbReference>
<dbReference type="InterPro" id="IPR013078">
    <property type="entry name" value="His_Pase_superF_clade-1"/>
</dbReference>
<dbReference type="InterPro" id="IPR029033">
    <property type="entry name" value="His_PPase_superfam"/>
</dbReference>
<dbReference type="InterPro" id="IPR050275">
    <property type="entry name" value="PGM_Phosphatase"/>
</dbReference>
<dbReference type="PANTHER" id="PTHR48100">
    <property type="entry name" value="BROAD-SPECIFICITY PHOSPHATASE YOR283W-RELATED"/>
    <property type="match status" value="1"/>
</dbReference>
<dbReference type="PANTHER" id="PTHR48100:SF56">
    <property type="entry name" value="PHOSPHATASE SPAC513.02-RELATED"/>
    <property type="match status" value="1"/>
</dbReference>
<dbReference type="Pfam" id="PF00300">
    <property type="entry name" value="His_Phos_1"/>
    <property type="match status" value="1"/>
</dbReference>
<dbReference type="SMART" id="SM00855">
    <property type="entry name" value="PGAM"/>
    <property type="match status" value="1"/>
</dbReference>
<dbReference type="SUPFAM" id="SSF53254">
    <property type="entry name" value="Phosphoglycerate mutase-like"/>
    <property type="match status" value="1"/>
</dbReference>
<organism>
    <name type="scientific">Schizosaccharomyces pombe (strain 972 / ATCC 24843)</name>
    <name type="common">Fission yeast</name>
    <dbReference type="NCBI Taxonomy" id="284812"/>
    <lineage>
        <taxon>Eukaryota</taxon>
        <taxon>Fungi</taxon>
        <taxon>Dikarya</taxon>
        <taxon>Ascomycota</taxon>
        <taxon>Taphrinomycotina</taxon>
        <taxon>Schizosaccharomycetes</taxon>
        <taxon>Schizosaccharomycetales</taxon>
        <taxon>Schizosaccharomycetaceae</taxon>
        <taxon>Schizosaccharomyces</taxon>
    </lineage>
</organism>
<comment type="subcellular location">
    <subcellularLocation>
        <location evidence="2">Cytoplasm</location>
    </subcellularLocation>
    <subcellularLocation>
        <location evidence="2">Nucleus</location>
    </subcellularLocation>
</comment>
<comment type="similarity">
    <text evidence="3">Belongs to the phosphoglycerate mutase family. BPG-dependent PGAM subfamily.</text>
</comment>
<proteinExistence type="inferred from homology"/>
<gene>
    <name type="ORF">SPAC513.02</name>
</gene>
<accession>Q9UT63</accession>
<protein>
    <recommendedName>
        <fullName>Probable phosphatase SPAC513.02</fullName>
        <ecNumber>3.1.3.-</ecNumber>
    </recommendedName>
</protein>
<feature type="chain" id="PRO_0000318491" description="Probable phosphatase SPAC513.02">
    <location>
        <begin position="1"/>
        <end position="216"/>
    </location>
</feature>
<feature type="active site" description="Tele-phosphohistidine intermediate" evidence="1">
    <location>
        <position position="15"/>
    </location>
</feature>
<feature type="site" description="Transition state stabilizer" evidence="1">
    <location>
        <position position="166"/>
    </location>
</feature>
<evidence type="ECO:0000250" key="1">
    <source>
        <dbReference type="UniProtKB" id="P62707"/>
    </source>
</evidence>
<evidence type="ECO:0000269" key="2">
    <source>
    </source>
</evidence>
<evidence type="ECO:0000305" key="3"/>
<name>YKJ2_SCHPO</name>
<sequence length="216" mass="25175">MASKGIDKTIYFVRHGQVSHDVDENGVHREHDPLLNDEGRKQALQLQHDLDAEKLPIELILVSPMRRALETMKIGFQHYIEDKHIPVKVIPLLQDCGDWACNVGSYTKDLEKQFPGYDYTACHEDPVFPKKEKIYKADYKTSIQRSRVLAEFFAKVPEKVFAVVTHGVDIRLFQKIQKPEDSLDAVPKEHSFSPCQHEEFRMHYEDDKNWNFEPVK</sequence>